<dbReference type="EC" id="4.4.1.17" evidence="5"/>
<dbReference type="EMBL" id="X04776">
    <property type="protein sequence ID" value="CAA28470.1"/>
    <property type="molecule type" value="Genomic_DNA"/>
</dbReference>
<dbReference type="EMBL" id="U12980">
    <property type="protein sequence ID" value="AAC04992.1"/>
    <property type="molecule type" value="Genomic_DNA"/>
</dbReference>
<dbReference type="EMBL" id="BK006935">
    <property type="protein sequence ID" value="DAA06947.1"/>
    <property type="molecule type" value="Genomic_DNA"/>
</dbReference>
<dbReference type="PIR" id="A26162">
    <property type="entry name" value="A26162"/>
</dbReference>
<dbReference type="RefSeq" id="NP_009361.1">
    <property type="nucleotide sequence ID" value="NM_001178184.1"/>
</dbReference>
<dbReference type="BioGRID" id="31726">
    <property type="interactions" value="108"/>
</dbReference>
<dbReference type="FunCoup" id="P06182">
    <property type="interactions" value="424"/>
</dbReference>
<dbReference type="IntAct" id="P06182">
    <property type="interactions" value="14"/>
</dbReference>
<dbReference type="STRING" id="4932.YAL039C"/>
<dbReference type="iPTMnet" id="P06182"/>
<dbReference type="PaxDb" id="4932-YAL039C"/>
<dbReference type="PeptideAtlas" id="P06182"/>
<dbReference type="EnsemblFungi" id="YAL039C_mRNA">
    <property type="protein sequence ID" value="YAL039C"/>
    <property type="gene ID" value="YAL039C"/>
</dbReference>
<dbReference type="GeneID" id="851192"/>
<dbReference type="KEGG" id="sce:YAL039C"/>
<dbReference type="AGR" id="SGD:S000000037"/>
<dbReference type="SGD" id="S000000037">
    <property type="gene designation" value="CYC3"/>
</dbReference>
<dbReference type="VEuPathDB" id="FungiDB:YAL039C"/>
<dbReference type="eggNOG" id="KOG3996">
    <property type="taxonomic scope" value="Eukaryota"/>
</dbReference>
<dbReference type="GeneTree" id="ENSGT00390000004175"/>
<dbReference type="HOGENOM" id="CLU_048602_0_1_1"/>
<dbReference type="InParanoid" id="P06182"/>
<dbReference type="OMA" id="KARFWLF"/>
<dbReference type="OrthoDB" id="1158011at2759"/>
<dbReference type="BioCyc" id="YEAST:YAL039C-MONOMER"/>
<dbReference type="BRENDA" id="4.4.1.17">
    <property type="organism ID" value="984"/>
</dbReference>
<dbReference type="BioGRID-ORCS" id="851192">
    <property type="hits" value="9 hits in 10 CRISPR screens"/>
</dbReference>
<dbReference type="PRO" id="PR:P06182"/>
<dbReference type="Proteomes" id="UP000002311">
    <property type="component" value="Chromosome I"/>
</dbReference>
<dbReference type="RNAct" id="P06182">
    <property type="molecule type" value="protein"/>
</dbReference>
<dbReference type="GO" id="GO:0005743">
    <property type="term" value="C:mitochondrial inner membrane"/>
    <property type="evidence" value="ECO:0007669"/>
    <property type="project" value="UniProtKB-SubCell"/>
</dbReference>
<dbReference type="GO" id="GO:0005758">
    <property type="term" value="C:mitochondrial intermembrane space"/>
    <property type="evidence" value="ECO:0000314"/>
    <property type="project" value="SGD"/>
</dbReference>
<dbReference type="GO" id="GO:0005739">
    <property type="term" value="C:mitochondrion"/>
    <property type="evidence" value="ECO:0007005"/>
    <property type="project" value="SGD"/>
</dbReference>
<dbReference type="GO" id="GO:0004408">
    <property type="term" value="F:holocytochrome-c synthase activity"/>
    <property type="evidence" value="ECO:0000314"/>
    <property type="project" value="SGD"/>
</dbReference>
<dbReference type="GO" id="GO:0046872">
    <property type="term" value="F:metal ion binding"/>
    <property type="evidence" value="ECO:0007669"/>
    <property type="project" value="UniProtKB-KW"/>
</dbReference>
<dbReference type="InterPro" id="IPR000511">
    <property type="entry name" value="Holocyt_c/c1_synthase"/>
</dbReference>
<dbReference type="PANTHER" id="PTHR12743">
    <property type="entry name" value="CYTOCHROME C1 HEME LYASE"/>
    <property type="match status" value="1"/>
</dbReference>
<dbReference type="PANTHER" id="PTHR12743:SF3">
    <property type="entry name" value="HOLOCYTOCHROME-C SYNTHASE"/>
    <property type="match status" value="1"/>
</dbReference>
<dbReference type="Pfam" id="PF01265">
    <property type="entry name" value="Cyto_heme_lyase"/>
    <property type="match status" value="1"/>
</dbReference>
<dbReference type="PROSITE" id="PS00821">
    <property type="entry name" value="CYTO_HEME_LYASE_1"/>
    <property type="match status" value="1"/>
</dbReference>
<dbReference type="PROSITE" id="PS00822">
    <property type="entry name" value="CYTO_HEME_LYASE_2"/>
    <property type="match status" value="1"/>
</dbReference>
<comment type="function">
    <text evidence="5">Lyase that catalyzes the covalent linking of the heme group to the cytochrome C apoprotein to produce the mature functional cytochrome.</text>
</comment>
<comment type="catalytic activity">
    <reaction evidence="5">
        <text>holo-[cytochrome c] = apo-[cytochrome c] + heme b</text>
        <dbReference type="Rhea" id="RHEA:22648"/>
        <dbReference type="Rhea" id="RHEA-COMP:10725"/>
        <dbReference type="Rhea" id="RHEA-COMP:10726"/>
        <dbReference type="ChEBI" id="CHEBI:29950"/>
        <dbReference type="ChEBI" id="CHEBI:60344"/>
        <dbReference type="ChEBI" id="CHEBI:83739"/>
        <dbReference type="EC" id="4.4.1.17"/>
    </reaction>
    <physiologicalReaction direction="left-to-right" evidence="7">
        <dbReference type="Rhea" id="RHEA:22649"/>
    </physiologicalReaction>
</comment>
<comment type="subcellular location">
    <subcellularLocation>
        <location evidence="1">Mitochondrion inner membrane</location>
    </subcellularLocation>
    <subcellularLocation>
        <location evidence="4">Mitochondrion intermembrane space</location>
    </subcellularLocation>
</comment>
<comment type="miscellaneous">
    <text evidence="3">Present with 3870 molecules/cell in log phase SD medium.</text>
</comment>
<comment type="similarity">
    <text evidence="6">Belongs to the cytochrome c-type heme lyase family.</text>
</comment>
<gene>
    <name type="primary">CYC3</name>
    <name type="ordered locus">YAL039C</name>
</gene>
<evidence type="ECO:0000250" key="1">
    <source>
        <dbReference type="UniProtKB" id="Q00873"/>
    </source>
</evidence>
<evidence type="ECO:0000256" key="2">
    <source>
        <dbReference type="SAM" id="MobiDB-lite"/>
    </source>
</evidence>
<evidence type="ECO:0000269" key="3">
    <source>
    </source>
</evidence>
<evidence type="ECO:0000269" key="4">
    <source>
    </source>
</evidence>
<evidence type="ECO:0000269" key="5">
    <source>
    </source>
</evidence>
<evidence type="ECO:0000305" key="6"/>
<evidence type="ECO:0000305" key="7">
    <source>
    </source>
</evidence>
<sequence>MGWFWADQKTTGKDIGGAAVSSMSGCPVMHESSSSSPPSSECPVMQGDNDRINPLNNMPELAASKQPGQKMDLPVDRTISSIPKSPDSNEFWEYPSPQQMYNAMVRKGKIGGSGEVAEDAVESMVQVHNFLNEGCWQEVLEWEKPHTDESHVQPKLLKFMGKPGVLSPRARWMHLCGLLFPSHFSQELPFDRHDWIVLRGERKAEQQPPTFKEVRYVLDFYGGPDDENGMPTFHVDVRPALDSLDNAKDRMTRFLDRMISGPSSSSSAP</sequence>
<reference key="1">
    <citation type="journal article" date="1987" name="EMBO J.">
        <title>Identification and sequence of the gene encoding cytochrome c heme lyase in the yeast Saccharomyces cerevisiae.</title>
        <authorList>
            <person name="Dumont M.E."/>
            <person name="Ernst J.F."/>
            <person name="Hampsey D.M."/>
            <person name="Sherman F."/>
        </authorList>
    </citation>
    <scope>NUCLEOTIDE SEQUENCE [GENOMIC DNA]</scope>
    <scope>FUNCTION</scope>
    <scope>CATALYTIC ACTIVITY</scope>
    <source>
        <strain>B-7034</strain>
    </source>
</reference>
<reference key="2">
    <citation type="journal article" date="1995" name="Proc. Natl. Acad. Sci. U.S.A.">
        <title>The nucleotide sequence of chromosome I from Saccharomyces cerevisiae.</title>
        <authorList>
            <person name="Bussey H."/>
            <person name="Kaback D.B."/>
            <person name="Zhong W.-W."/>
            <person name="Vo D.H."/>
            <person name="Clark M.W."/>
            <person name="Fortin N."/>
            <person name="Hall J."/>
            <person name="Ouellette B.F.F."/>
            <person name="Keng T."/>
            <person name="Barton A.B."/>
            <person name="Su Y."/>
            <person name="Davies C.J."/>
            <person name="Storms R.K."/>
        </authorList>
    </citation>
    <scope>NUCLEOTIDE SEQUENCE [LARGE SCALE GENOMIC DNA]</scope>
    <source>
        <strain>ATCC 204508 / S288c</strain>
    </source>
</reference>
<reference key="3">
    <citation type="journal article" date="2014" name="G3 (Bethesda)">
        <title>The reference genome sequence of Saccharomyces cerevisiae: Then and now.</title>
        <authorList>
            <person name="Engel S.R."/>
            <person name="Dietrich F.S."/>
            <person name="Fisk D.G."/>
            <person name="Binkley G."/>
            <person name="Balakrishnan R."/>
            <person name="Costanzo M.C."/>
            <person name="Dwight S.S."/>
            <person name="Hitz B.C."/>
            <person name="Karra K."/>
            <person name="Nash R.S."/>
            <person name="Weng S."/>
            <person name="Wong E.D."/>
            <person name="Lloyd P."/>
            <person name="Skrzypek M.S."/>
            <person name="Miyasato S.R."/>
            <person name="Simison M."/>
            <person name="Cherry J.M."/>
        </authorList>
    </citation>
    <scope>GENOME REANNOTATION</scope>
    <source>
        <strain>ATCC 204508 / S288c</strain>
    </source>
</reference>
<reference key="4">
    <citation type="journal article" date="2003" name="Nature">
        <title>Global analysis of protein expression in yeast.</title>
        <authorList>
            <person name="Ghaemmaghami S."/>
            <person name="Huh W.-K."/>
            <person name="Bower K."/>
            <person name="Howson R.W."/>
            <person name="Belle A."/>
            <person name="Dephoure N."/>
            <person name="O'Shea E.K."/>
            <person name="Weissman J.S."/>
        </authorList>
    </citation>
    <scope>LEVEL OF PROTEIN EXPRESSION [LARGE SCALE ANALYSIS]</scope>
</reference>
<reference key="5">
    <citation type="journal article" date="2012" name="Mol. Cell. Proteomics">
        <title>Intermembrane space proteome of yeast mitochondria.</title>
        <authorList>
            <person name="Voegtle F.N."/>
            <person name="Burkhart J.M."/>
            <person name="Rao S."/>
            <person name="Gerbeth C."/>
            <person name="Hinrichs J."/>
            <person name="Martinou J.C."/>
            <person name="Chacinska A."/>
            <person name="Sickmann A."/>
            <person name="Zahedi R.P."/>
            <person name="Meisinger C."/>
        </authorList>
    </citation>
    <scope>IDENTIFICATION BY MASS SPECTROMETRY</scope>
    <scope>SUBCELLULAR LOCATION [LARGE SCALE ANALYSIS]</scope>
</reference>
<proteinExistence type="evidence at protein level"/>
<protein>
    <recommendedName>
        <fullName evidence="7">Holocytochrome-c synthase</fullName>
        <ecNumber evidence="5">4.4.1.17</ecNumber>
    </recommendedName>
    <alternativeName>
        <fullName evidence="7">Cytochrome c heme lyase</fullName>
        <shortName>CCHL</shortName>
    </alternativeName>
</protein>
<accession>P06182</accession>
<accession>D6VPH7</accession>
<feature type="chain" id="PRO_0000121718" description="Holocytochrome-c synthase">
    <location>
        <begin position="1"/>
        <end position="269"/>
    </location>
</feature>
<feature type="repeat" description="HRM 1">
    <location>
        <begin position="25"/>
        <end position="30"/>
    </location>
</feature>
<feature type="repeat" description="HRM 2">
    <location>
        <begin position="41"/>
        <end position="46"/>
    </location>
</feature>
<feature type="region of interest" description="Disordered" evidence="2">
    <location>
        <begin position="1"/>
        <end position="72"/>
    </location>
</feature>
<name>CCHL_YEAST</name>
<organism>
    <name type="scientific">Saccharomyces cerevisiae (strain ATCC 204508 / S288c)</name>
    <name type="common">Baker's yeast</name>
    <dbReference type="NCBI Taxonomy" id="559292"/>
    <lineage>
        <taxon>Eukaryota</taxon>
        <taxon>Fungi</taxon>
        <taxon>Dikarya</taxon>
        <taxon>Ascomycota</taxon>
        <taxon>Saccharomycotina</taxon>
        <taxon>Saccharomycetes</taxon>
        <taxon>Saccharomycetales</taxon>
        <taxon>Saccharomycetaceae</taxon>
        <taxon>Saccharomyces</taxon>
    </lineage>
</organism>
<keyword id="KW-0349">Heme</keyword>
<keyword id="KW-0408">Iron</keyword>
<keyword id="KW-0456">Lyase</keyword>
<keyword id="KW-0472">Membrane</keyword>
<keyword id="KW-0479">Metal-binding</keyword>
<keyword id="KW-0496">Mitochondrion</keyword>
<keyword id="KW-0999">Mitochondrion inner membrane</keyword>
<keyword id="KW-1185">Reference proteome</keyword>
<keyword id="KW-0677">Repeat</keyword>